<name>MIEAP_HUMAN</name>
<keyword id="KW-0025">Alternative splicing</keyword>
<keyword id="KW-0175">Coiled coil</keyword>
<keyword id="KW-0963">Cytoplasm</keyword>
<keyword id="KW-0446">Lipid-binding</keyword>
<keyword id="KW-0472">Membrane</keyword>
<keyword id="KW-0496">Mitochondrion</keyword>
<keyword id="KW-1000">Mitochondrion outer membrane</keyword>
<keyword id="KW-0597">Phosphoprotein</keyword>
<keyword id="KW-1267">Proteomics identification</keyword>
<keyword id="KW-1185">Reference proteome</keyword>
<accession>Q8TC71</accession>
<accession>B4E2R0</accession>
<accession>E5RLK1</accession>
<accession>Q8IY48</accession>
<accession>Q8N7D7</accession>
<organism>
    <name type="scientific">Homo sapiens</name>
    <name type="common">Human</name>
    <dbReference type="NCBI Taxonomy" id="9606"/>
    <lineage>
        <taxon>Eukaryota</taxon>
        <taxon>Metazoa</taxon>
        <taxon>Chordata</taxon>
        <taxon>Craniata</taxon>
        <taxon>Vertebrata</taxon>
        <taxon>Euteleostomi</taxon>
        <taxon>Mammalia</taxon>
        <taxon>Eutheria</taxon>
        <taxon>Euarchontoglires</taxon>
        <taxon>Primates</taxon>
        <taxon>Haplorrhini</taxon>
        <taxon>Catarrhini</taxon>
        <taxon>Hominidae</taxon>
        <taxon>Homo</taxon>
    </lineage>
</organism>
<evidence type="ECO:0000250" key="1">
    <source>
        <dbReference type="UniProtKB" id="Q6AYL6"/>
    </source>
</evidence>
<evidence type="ECO:0000255" key="2"/>
<evidence type="ECO:0000256" key="3">
    <source>
        <dbReference type="SAM" id="MobiDB-lite"/>
    </source>
</evidence>
<evidence type="ECO:0000269" key="4">
    <source>
    </source>
</evidence>
<evidence type="ECO:0000269" key="5">
    <source>
    </source>
</evidence>
<evidence type="ECO:0000269" key="6">
    <source>
    </source>
</evidence>
<evidence type="ECO:0000269" key="7">
    <source>
    </source>
</evidence>
<evidence type="ECO:0000269" key="8">
    <source>
    </source>
</evidence>
<evidence type="ECO:0000269" key="9">
    <source>
    </source>
</evidence>
<evidence type="ECO:0000269" key="10">
    <source>
    </source>
</evidence>
<evidence type="ECO:0000269" key="11">
    <source>
    </source>
</evidence>
<evidence type="ECO:0000303" key="12">
    <source>
    </source>
</evidence>
<evidence type="ECO:0000303" key="13">
    <source>
    </source>
</evidence>
<evidence type="ECO:0000305" key="14"/>
<sequence>MAENLKRLVSNETLRTLQEKLDFWLKEYNTNTCDQNLNHCLELIEQVAKVQGQLFGILTAAAQEGGRNDGVETIKSRLLPWLEASFTAASLGKSVDSKVPSLQDTFDRERHKDPSPRDRDMQQLDSNLNSTRSQCNQVQDDLVETEKNLEESKNRSAISLLAAEEEINQLKKQLKSLQAQEDARHRNTDQRSSENRRSEPWSLEERKREQWNSLKQNADQQDTEAMSDYKKQLRNLKEEIAVLSAEKSALQGRSSRSRSPSPAPRSRSCSRSRSASPSTAVKVRRPSPNRSKLSNVARKAALLSRFSDSYSQARLDAQCLLRRCIDKAETVQRIIYIATVEAFHVAKMAFRHFKIHVRKSLTPSYVGSNDFENAVLDYVICHLDLYDSQSSVNDVIRAMNVNPKISFPPVVDFCLLSDFIQEICCIAFAMQALEPPLDIAYGADGEVFNDCKYRRSYDSDFTAPLVLYHVWPALMENDCVIMKGEAVTRRGAFWNSVRSVSRCRSRSLSPICPRSQIGLNTMSRSRSPSPIRCGLPRF</sequence>
<feature type="chain" id="PRO_0000254165" description="Mitochondria-eating protein">
    <location>
        <begin position="1"/>
        <end position="538"/>
    </location>
</feature>
<feature type="region of interest" description="Interaction with YWHAG/14-3-3 protein gamma" evidence="10">
    <location>
        <begin position="1"/>
        <end position="273"/>
    </location>
</feature>
<feature type="region of interest" description="Disordered" evidence="3">
    <location>
        <begin position="97"/>
        <end position="137"/>
    </location>
</feature>
<feature type="region of interest" description="Disordered" evidence="3">
    <location>
        <begin position="173"/>
        <end position="226"/>
    </location>
</feature>
<feature type="region of interest" description="Disordered" evidence="3">
    <location>
        <begin position="247"/>
        <end position="294"/>
    </location>
</feature>
<feature type="coiled-coil region" evidence="2">
    <location>
        <begin position="118"/>
        <end position="187"/>
    </location>
</feature>
<feature type="coiled-coil region" evidence="2">
    <location>
        <begin position="219"/>
        <end position="256"/>
    </location>
</feature>
<feature type="compositionally biased region" description="Basic and acidic residues" evidence="3">
    <location>
        <begin position="105"/>
        <end position="122"/>
    </location>
</feature>
<feature type="compositionally biased region" description="Polar residues" evidence="3">
    <location>
        <begin position="123"/>
        <end position="137"/>
    </location>
</feature>
<feature type="compositionally biased region" description="Basic and acidic residues" evidence="3">
    <location>
        <begin position="181"/>
        <end position="210"/>
    </location>
</feature>
<feature type="compositionally biased region" description="Polar residues" evidence="3">
    <location>
        <begin position="211"/>
        <end position="224"/>
    </location>
</feature>
<feature type="compositionally biased region" description="Low complexity" evidence="3">
    <location>
        <begin position="253"/>
        <end position="278"/>
    </location>
</feature>
<feature type="modified residue" description="Phosphoserine" evidence="1">
    <location>
        <position position="85"/>
    </location>
</feature>
<feature type="modified residue" description="Phosphoserine" evidence="1">
    <location>
        <position position="156"/>
    </location>
</feature>
<feature type="modified residue" description="Phosphoserine" evidence="1">
    <location>
        <position position="159"/>
    </location>
</feature>
<feature type="modified residue" description="Phosphoserine" evidence="1">
    <location>
        <position position="287"/>
    </location>
</feature>
<feature type="modified residue" description="Phosphoserine" evidence="1">
    <location>
        <position position="509"/>
    </location>
</feature>
<feature type="splice variant" id="VSP_041048" description="In isoform 2." evidence="12 13">
    <original>DLVETEKNLEESKNRSAISLLAAEEEINQLKKQ</original>
    <variation>E</variation>
    <location>
        <begin position="141"/>
        <end position="173"/>
    </location>
</feature>
<feature type="sequence variant" id="VAR_028828" description="In dbSNP:rs3860707." evidence="4">
    <original>S</original>
    <variation>P</variation>
    <location>
        <position position="227"/>
    </location>
</feature>
<feature type="sequence variant" id="VAR_028829" description="In dbSNP:rs11558773." evidence="5">
    <original>K</original>
    <variation>R</variation>
    <location>
        <position position="483"/>
    </location>
</feature>
<feature type="sequence conflict" description="In Ref. 5; AAH37886." evidence="14" ref="5">
    <original>Q</original>
    <variation>E</variation>
    <location>
        <position position="318"/>
    </location>
</feature>
<dbReference type="EMBL" id="AB465501">
    <property type="protein sequence ID" value="BAJ53738.1"/>
    <property type="molecule type" value="mRNA"/>
</dbReference>
<dbReference type="EMBL" id="AB465502">
    <property type="protein sequence ID" value="BAJ53739.1"/>
    <property type="molecule type" value="mRNA"/>
</dbReference>
<dbReference type="EMBL" id="AK098625">
    <property type="protein sequence ID" value="BAC05356.1"/>
    <property type="status" value="ALT_INIT"/>
    <property type="molecule type" value="mRNA"/>
</dbReference>
<dbReference type="EMBL" id="AK304386">
    <property type="protein sequence ID" value="BAG65222.1"/>
    <property type="molecule type" value="mRNA"/>
</dbReference>
<dbReference type="EMBL" id="AC093858">
    <property type="status" value="NOT_ANNOTATED_CDS"/>
    <property type="molecule type" value="Genomic_DNA"/>
</dbReference>
<dbReference type="EMBL" id="CH471057">
    <property type="protein sequence ID" value="EAX05433.1"/>
    <property type="molecule type" value="Genomic_DNA"/>
</dbReference>
<dbReference type="EMBL" id="BC025396">
    <property type="protein sequence ID" value="AAH25396.1"/>
    <property type="molecule type" value="mRNA"/>
</dbReference>
<dbReference type="EMBL" id="BC037886">
    <property type="protein sequence ID" value="AAH37886.1"/>
    <property type="molecule type" value="mRNA"/>
</dbReference>
<dbReference type="CCDS" id="CCDS3489.1">
    <molecule id="Q8TC71-1"/>
</dbReference>
<dbReference type="CCDS" id="CCDS75124.1">
    <molecule id="Q8TC71-2"/>
</dbReference>
<dbReference type="RefSeq" id="NP_001284537.1">
    <molecule id="Q8TC71-2"/>
    <property type="nucleotide sequence ID" value="NM_001297608.2"/>
</dbReference>
<dbReference type="RefSeq" id="NP_660306.1">
    <molecule id="Q8TC71-1"/>
    <property type="nucleotide sequence ID" value="NM_145263.4"/>
</dbReference>
<dbReference type="SMR" id="Q8TC71"/>
<dbReference type="BioGRID" id="126329">
    <property type="interactions" value="28"/>
</dbReference>
<dbReference type="FunCoup" id="Q8TC71">
    <property type="interactions" value="700"/>
</dbReference>
<dbReference type="IntAct" id="Q8TC71">
    <property type="interactions" value="21"/>
</dbReference>
<dbReference type="MINT" id="Q8TC71"/>
<dbReference type="STRING" id="9606.ENSP00000295213"/>
<dbReference type="GlyGen" id="Q8TC71">
    <property type="glycosylation" value="1 site, 1 O-linked glycan (1 site)"/>
</dbReference>
<dbReference type="iPTMnet" id="Q8TC71"/>
<dbReference type="PhosphoSitePlus" id="Q8TC71"/>
<dbReference type="BioMuta" id="SPATA18"/>
<dbReference type="DMDM" id="74751399"/>
<dbReference type="jPOST" id="Q8TC71"/>
<dbReference type="MassIVE" id="Q8TC71"/>
<dbReference type="PaxDb" id="9606-ENSP00000295213"/>
<dbReference type="PeptideAtlas" id="Q8TC71"/>
<dbReference type="ProteomicsDB" id="74095">
    <molecule id="Q8TC71-1"/>
</dbReference>
<dbReference type="ProteomicsDB" id="74096">
    <molecule id="Q8TC71-2"/>
</dbReference>
<dbReference type="Antibodypedia" id="49630">
    <property type="antibodies" value="112 antibodies from 24 providers"/>
</dbReference>
<dbReference type="DNASU" id="132671"/>
<dbReference type="Ensembl" id="ENST00000295213.9">
    <molecule id="Q8TC71-1"/>
    <property type="protein sequence ID" value="ENSP00000295213.4"/>
    <property type="gene ID" value="ENSG00000163071.11"/>
</dbReference>
<dbReference type="Ensembl" id="ENST00000419395.6">
    <molecule id="Q8TC71-2"/>
    <property type="protein sequence ID" value="ENSP00000415309.2"/>
    <property type="gene ID" value="ENSG00000163071.11"/>
</dbReference>
<dbReference type="GeneID" id="132671"/>
<dbReference type="KEGG" id="hsa:132671"/>
<dbReference type="MANE-Select" id="ENST00000295213.9">
    <property type="protein sequence ID" value="ENSP00000295213.4"/>
    <property type="RefSeq nucleotide sequence ID" value="NM_145263.4"/>
    <property type="RefSeq protein sequence ID" value="NP_660306.1"/>
</dbReference>
<dbReference type="UCSC" id="uc003gzl.4">
    <molecule id="Q8TC71-1"/>
    <property type="organism name" value="human"/>
</dbReference>
<dbReference type="AGR" id="HGNC:29579"/>
<dbReference type="CTD" id="132671"/>
<dbReference type="DisGeNET" id="132671"/>
<dbReference type="GeneCards" id="SPATA18"/>
<dbReference type="HGNC" id="HGNC:29579">
    <property type="gene designation" value="SPATA18"/>
</dbReference>
<dbReference type="HPA" id="ENSG00000163071">
    <property type="expression patterns" value="Tissue enhanced (fallopian tube, testis)"/>
</dbReference>
<dbReference type="MalaCards" id="SPATA18"/>
<dbReference type="MIM" id="612814">
    <property type="type" value="gene"/>
</dbReference>
<dbReference type="neXtProt" id="NX_Q8TC71"/>
<dbReference type="OpenTargets" id="ENSG00000163071"/>
<dbReference type="PharmGKB" id="PA142670883"/>
<dbReference type="VEuPathDB" id="HostDB:ENSG00000163071"/>
<dbReference type="eggNOG" id="ENOG502QQMJ">
    <property type="taxonomic scope" value="Eukaryota"/>
</dbReference>
<dbReference type="GeneTree" id="ENSGT00390000013532"/>
<dbReference type="HOGENOM" id="CLU_041752_0_0_1"/>
<dbReference type="InParanoid" id="Q8TC71"/>
<dbReference type="OMA" id="DQNLNIC"/>
<dbReference type="OrthoDB" id="5966837at2759"/>
<dbReference type="PAN-GO" id="Q8TC71">
    <property type="GO annotations" value="3 GO annotations based on evolutionary models"/>
</dbReference>
<dbReference type="PhylomeDB" id="Q8TC71"/>
<dbReference type="TreeFam" id="TF328808"/>
<dbReference type="PathwayCommons" id="Q8TC71"/>
<dbReference type="SignaLink" id="Q8TC71"/>
<dbReference type="BioGRID-ORCS" id="132671">
    <property type="hits" value="10 hits in 1146 CRISPR screens"/>
</dbReference>
<dbReference type="ChiTaRS" id="SPATA18">
    <property type="organism name" value="human"/>
</dbReference>
<dbReference type="GenomeRNAi" id="132671"/>
<dbReference type="Pharos" id="Q8TC71">
    <property type="development level" value="Tbio"/>
</dbReference>
<dbReference type="PRO" id="PR:Q8TC71"/>
<dbReference type="Proteomes" id="UP000005640">
    <property type="component" value="Chromosome 4"/>
</dbReference>
<dbReference type="RNAct" id="Q8TC71">
    <property type="molecule type" value="protein"/>
</dbReference>
<dbReference type="Bgee" id="ENSG00000163071">
    <property type="expression patterns" value="Expressed in sperm and 155 other cell types or tissues"/>
</dbReference>
<dbReference type="ExpressionAtlas" id="Q8TC71">
    <property type="expression patterns" value="baseline and differential"/>
</dbReference>
<dbReference type="GO" id="GO:0005737">
    <property type="term" value="C:cytoplasm"/>
    <property type="evidence" value="ECO:0000314"/>
    <property type="project" value="UniProtKB"/>
</dbReference>
<dbReference type="GO" id="GO:0005829">
    <property type="term" value="C:cytosol"/>
    <property type="evidence" value="ECO:0000314"/>
    <property type="project" value="HPA"/>
</dbReference>
<dbReference type="GO" id="GO:0043231">
    <property type="term" value="C:intracellular membrane-bounded organelle"/>
    <property type="evidence" value="ECO:0000314"/>
    <property type="project" value="UniProtKB"/>
</dbReference>
<dbReference type="GO" id="GO:0043232">
    <property type="term" value="C:intracellular membraneless organelle"/>
    <property type="evidence" value="ECO:0000314"/>
    <property type="project" value="FlyBase"/>
</dbReference>
<dbReference type="GO" id="GO:0005759">
    <property type="term" value="C:mitochondrial matrix"/>
    <property type="evidence" value="ECO:0000314"/>
    <property type="project" value="UniProtKB"/>
</dbReference>
<dbReference type="GO" id="GO:0005741">
    <property type="term" value="C:mitochondrial outer membrane"/>
    <property type="evidence" value="ECO:0000314"/>
    <property type="project" value="UniProtKB"/>
</dbReference>
<dbReference type="GO" id="GO:0005739">
    <property type="term" value="C:mitochondrion"/>
    <property type="evidence" value="ECO:0000314"/>
    <property type="project" value="HPA"/>
</dbReference>
<dbReference type="GO" id="GO:0005654">
    <property type="term" value="C:nucleoplasm"/>
    <property type="evidence" value="ECO:0000314"/>
    <property type="project" value="HPA"/>
</dbReference>
<dbReference type="GO" id="GO:1901612">
    <property type="term" value="F:cardiolipin binding"/>
    <property type="evidence" value="ECO:0000314"/>
    <property type="project" value="UniProtKB"/>
</dbReference>
<dbReference type="GO" id="GO:0042802">
    <property type="term" value="F:identical protein binding"/>
    <property type="evidence" value="ECO:0000353"/>
    <property type="project" value="IntAct"/>
</dbReference>
<dbReference type="GO" id="GO:0140693">
    <property type="term" value="F:molecular condensate scaffold activity"/>
    <property type="evidence" value="ECO:0000314"/>
    <property type="project" value="FlyBase"/>
</dbReference>
<dbReference type="GO" id="GO:0035694">
    <property type="term" value="P:mitochondrial protein catabolic process"/>
    <property type="evidence" value="ECO:0000315"/>
    <property type="project" value="UniProtKB"/>
</dbReference>
<dbReference type="GO" id="GO:0035695">
    <property type="term" value="P:mitophagy by internal vacuole formation"/>
    <property type="evidence" value="ECO:0000315"/>
    <property type="project" value="UniProtKB"/>
</dbReference>
<dbReference type="GO" id="GO:1900210">
    <property type="term" value="P:positive regulation of cardiolipin metabolic process"/>
    <property type="evidence" value="ECO:0000315"/>
    <property type="project" value="FlyBase"/>
</dbReference>
<dbReference type="InterPro" id="IPR026169">
    <property type="entry name" value="MIEAP"/>
</dbReference>
<dbReference type="InterPro" id="IPR031981">
    <property type="entry name" value="MIEAP_C"/>
</dbReference>
<dbReference type="PANTHER" id="PTHR21771:SF0">
    <property type="entry name" value="MITOCHONDRIA-EATING PROTEIN"/>
    <property type="match status" value="1"/>
</dbReference>
<dbReference type="PANTHER" id="PTHR21771">
    <property type="entry name" value="MITOCHONDRIA-EATING PROTEIN-RELATED"/>
    <property type="match status" value="1"/>
</dbReference>
<dbReference type="Pfam" id="PF16026">
    <property type="entry name" value="MIEAP"/>
    <property type="match status" value="1"/>
</dbReference>
<reference key="1">
    <citation type="journal article" date="2011" name="PLoS ONE">
        <title>Possible existence of lysosome-like organella within mitochondria and its role in mitochondrial quality control.</title>
        <authorList>
            <person name="Miyamoto Y."/>
            <person name="Kitamura N."/>
            <person name="Nakamura Y."/>
            <person name="Futamura M."/>
            <person name="Miyamoto T."/>
            <person name="Yoshida M."/>
            <person name="Ono M."/>
            <person name="Ichinose S."/>
            <person name="Arakawa H."/>
        </authorList>
    </citation>
    <scope>NUCLEOTIDE SEQUENCE [MRNA] (ISOFORMS 1 AND 2)</scope>
    <scope>FUNCTION</scope>
    <scope>SUBCELLULAR LOCATION</scope>
    <scope>INDUCTION</scope>
</reference>
<reference key="2">
    <citation type="journal article" date="2004" name="Nat. Genet.">
        <title>Complete sequencing and characterization of 21,243 full-length human cDNAs.</title>
        <authorList>
            <person name="Ota T."/>
            <person name="Suzuki Y."/>
            <person name="Nishikawa T."/>
            <person name="Otsuki T."/>
            <person name="Sugiyama T."/>
            <person name="Irie R."/>
            <person name="Wakamatsu A."/>
            <person name="Hayashi K."/>
            <person name="Sato H."/>
            <person name="Nagai K."/>
            <person name="Kimura K."/>
            <person name="Makita H."/>
            <person name="Sekine M."/>
            <person name="Obayashi M."/>
            <person name="Nishi T."/>
            <person name="Shibahara T."/>
            <person name="Tanaka T."/>
            <person name="Ishii S."/>
            <person name="Yamamoto J."/>
            <person name="Saito K."/>
            <person name="Kawai Y."/>
            <person name="Isono Y."/>
            <person name="Nakamura Y."/>
            <person name="Nagahari K."/>
            <person name="Murakami K."/>
            <person name="Yasuda T."/>
            <person name="Iwayanagi T."/>
            <person name="Wagatsuma M."/>
            <person name="Shiratori A."/>
            <person name="Sudo H."/>
            <person name="Hosoiri T."/>
            <person name="Kaku Y."/>
            <person name="Kodaira H."/>
            <person name="Kondo H."/>
            <person name="Sugawara M."/>
            <person name="Takahashi M."/>
            <person name="Kanda K."/>
            <person name="Yokoi T."/>
            <person name="Furuya T."/>
            <person name="Kikkawa E."/>
            <person name="Omura Y."/>
            <person name="Abe K."/>
            <person name="Kamihara K."/>
            <person name="Katsuta N."/>
            <person name="Sato K."/>
            <person name="Tanikawa M."/>
            <person name="Yamazaki M."/>
            <person name="Ninomiya K."/>
            <person name="Ishibashi T."/>
            <person name="Yamashita H."/>
            <person name="Murakawa K."/>
            <person name="Fujimori K."/>
            <person name="Tanai H."/>
            <person name="Kimata M."/>
            <person name="Watanabe M."/>
            <person name="Hiraoka S."/>
            <person name="Chiba Y."/>
            <person name="Ishida S."/>
            <person name="Ono Y."/>
            <person name="Takiguchi S."/>
            <person name="Watanabe S."/>
            <person name="Yosida M."/>
            <person name="Hotuta T."/>
            <person name="Kusano J."/>
            <person name="Kanehori K."/>
            <person name="Takahashi-Fujii A."/>
            <person name="Hara H."/>
            <person name="Tanase T.-O."/>
            <person name="Nomura Y."/>
            <person name="Togiya S."/>
            <person name="Komai F."/>
            <person name="Hara R."/>
            <person name="Takeuchi K."/>
            <person name="Arita M."/>
            <person name="Imose N."/>
            <person name="Musashino K."/>
            <person name="Yuuki H."/>
            <person name="Oshima A."/>
            <person name="Sasaki N."/>
            <person name="Aotsuka S."/>
            <person name="Yoshikawa Y."/>
            <person name="Matsunawa H."/>
            <person name="Ichihara T."/>
            <person name="Shiohata N."/>
            <person name="Sano S."/>
            <person name="Moriya S."/>
            <person name="Momiyama H."/>
            <person name="Satoh N."/>
            <person name="Takami S."/>
            <person name="Terashima Y."/>
            <person name="Suzuki O."/>
            <person name="Nakagawa S."/>
            <person name="Senoh A."/>
            <person name="Mizoguchi H."/>
            <person name="Goto Y."/>
            <person name="Shimizu F."/>
            <person name="Wakebe H."/>
            <person name="Hishigaki H."/>
            <person name="Watanabe T."/>
            <person name="Sugiyama A."/>
            <person name="Takemoto M."/>
            <person name="Kawakami B."/>
            <person name="Yamazaki M."/>
            <person name="Watanabe K."/>
            <person name="Kumagai A."/>
            <person name="Itakura S."/>
            <person name="Fukuzumi Y."/>
            <person name="Fujimori Y."/>
            <person name="Komiyama M."/>
            <person name="Tashiro H."/>
            <person name="Tanigami A."/>
            <person name="Fujiwara T."/>
            <person name="Ono T."/>
            <person name="Yamada K."/>
            <person name="Fujii Y."/>
            <person name="Ozaki K."/>
            <person name="Hirao M."/>
            <person name="Ohmori Y."/>
            <person name="Kawabata A."/>
            <person name="Hikiji T."/>
            <person name="Kobatake N."/>
            <person name="Inagaki H."/>
            <person name="Ikema Y."/>
            <person name="Okamoto S."/>
            <person name="Okitani R."/>
            <person name="Kawakami T."/>
            <person name="Noguchi S."/>
            <person name="Itoh T."/>
            <person name="Shigeta K."/>
            <person name="Senba T."/>
            <person name="Matsumura K."/>
            <person name="Nakajima Y."/>
            <person name="Mizuno T."/>
            <person name="Morinaga M."/>
            <person name="Sasaki M."/>
            <person name="Togashi T."/>
            <person name="Oyama M."/>
            <person name="Hata H."/>
            <person name="Watanabe M."/>
            <person name="Komatsu T."/>
            <person name="Mizushima-Sugano J."/>
            <person name="Satoh T."/>
            <person name="Shirai Y."/>
            <person name="Takahashi Y."/>
            <person name="Nakagawa K."/>
            <person name="Okumura K."/>
            <person name="Nagase T."/>
            <person name="Nomura N."/>
            <person name="Kikuchi H."/>
            <person name="Masuho Y."/>
            <person name="Yamashita R."/>
            <person name="Nakai K."/>
            <person name="Yada T."/>
            <person name="Nakamura Y."/>
            <person name="Ohara O."/>
            <person name="Isogai T."/>
            <person name="Sugano S."/>
        </authorList>
    </citation>
    <scope>NUCLEOTIDE SEQUENCE [LARGE SCALE MRNA] (ISOFORM 2)</scope>
    <scope>NUCLEOTIDE SEQUENCE [LARGE SCALE MRNA] OF 135-538 (ISOFORM 1)</scope>
    <scope>VARIANT PRO-227</scope>
    <source>
        <tissue>Testis</tissue>
        <tissue>Trachea</tissue>
    </source>
</reference>
<reference key="3">
    <citation type="journal article" date="2005" name="Nature">
        <title>Generation and annotation of the DNA sequences of human chromosomes 2 and 4.</title>
        <authorList>
            <person name="Hillier L.W."/>
            <person name="Graves T.A."/>
            <person name="Fulton R.S."/>
            <person name="Fulton L.A."/>
            <person name="Pepin K.H."/>
            <person name="Minx P."/>
            <person name="Wagner-McPherson C."/>
            <person name="Layman D."/>
            <person name="Wylie K."/>
            <person name="Sekhon M."/>
            <person name="Becker M.C."/>
            <person name="Fewell G.A."/>
            <person name="Delehaunty K.D."/>
            <person name="Miner T.L."/>
            <person name="Nash W.E."/>
            <person name="Kremitzki C."/>
            <person name="Oddy L."/>
            <person name="Du H."/>
            <person name="Sun H."/>
            <person name="Bradshaw-Cordum H."/>
            <person name="Ali J."/>
            <person name="Carter J."/>
            <person name="Cordes M."/>
            <person name="Harris A."/>
            <person name="Isak A."/>
            <person name="van Brunt A."/>
            <person name="Nguyen C."/>
            <person name="Du F."/>
            <person name="Courtney L."/>
            <person name="Kalicki J."/>
            <person name="Ozersky P."/>
            <person name="Abbott S."/>
            <person name="Armstrong J."/>
            <person name="Belter E.A."/>
            <person name="Caruso L."/>
            <person name="Cedroni M."/>
            <person name="Cotton M."/>
            <person name="Davidson T."/>
            <person name="Desai A."/>
            <person name="Elliott G."/>
            <person name="Erb T."/>
            <person name="Fronick C."/>
            <person name="Gaige T."/>
            <person name="Haakenson W."/>
            <person name="Haglund K."/>
            <person name="Holmes A."/>
            <person name="Harkins R."/>
            <person name="Kim K."/>
            <person name="Kruchowski S.S."/>
            <person name="Strong C.M."/>
            <person name="Grewal N."/>
            <person name="Goyea E."/>
            <person name="Hou S."/>
            <person name="Levy A."/>
            <person name="Martinka S."/>
            <person name="Mead K."/>
            <person name="McLellan M.D."/>
            <person name="Meyer R."/>
            <person name="Randall-Maher J."/>
            <person name="Tomlinson C."/>
            <person name="Dauphin-Kohlberg S."/>
            <person name="Kozlowicz-Reilly A."/>
            <person name="Shah N."/>
            <person name="Swearengen-Shahid S."/>
            <person name="Snider J."/>
            <person name="Strong J.T."/>
            <person name="Thompson J."/>
            <person name="Yoakum M."/>
            <person name="Leonard S."/>
            <person name="Pearman C."/>
            <person name="Trani L."/>
            <person name="Radionenko M."/>
            <person name="Waligorski J.E."/>
            <person name="Wang C."/>
            <person name="Rock S.M."/>
            <person name="Tin-Wollam A.-M."/>
            <person name="Maupin R."/>
            <person name="Latreille P."/>
            <person name="Wendl M.C."/>
            <person name="Yang S.-P."/>
            <person name="Pohl C."/>
            <person name="Wallis J.W."/>
            <person name="Spieth J."/>
            <person name="Bieri T.A."/>
            <person name="Berkowicz N."/>
            <person name="Nelson J.O."/>
            <person name="Osborne J."/>
            <person name="Ding L."/>
            <person name="Meyer R."/>
            <person name="Sabo A."/>
            <person name="Shotland Y."/>
            <person name="Sinha P."/>
            <person name="Wohldmann P.E."/>
            <person name="Cook L.L."/>
            <person name="Hickenbotham M.T."/>
            <person name="Eldred J."/>
            <person name="Williams D."/>
            <person name="Jones T.A."/>
            <person name="She X."/>
            <person name="Ciccarelli F.D."/>
            <person name="Izaurralde E."/>
            <person name="Taylor J."/>
            <person name="Schmutz J."/>
            <person name="Myers R.M."/>
            <person name="Cox D.R."/>
            <person name="Huang X."/>
            <person name="McPherson J.D."/>
            <person name="Mardis E.R."/>
            <person name="Clifton S.W."/>
            <person name="Warren W.C."/>
            <person name="Chinwalla A.T."/>
            <person name="Eddy S.R."/>
            <person name="Marra M.A."/>
            <person name="Ovcharenko I."/>
            <person name="Furey T.S."/>
            <person name="Miller W."/>
            <person name="Eichler E.E."/>
            <person name="Bork P."/>
            <person name="Suyama M."/>
            <person name="Torrents D."/>
            <person name="Waterston R.H."/>
            <person name="Wilson R.K."/>
        </authorList>
    </citation>
    <scope>NUCLEOTIDE SEQUENCE [LARGE SCALE GENOMIC DNA]</scope>
</reference>
<reference key="4">
    <citation type="submission" date="2005-07" db="EMBL/GenBank/DDBJ databases">
        <authorList>
            <person name="Mural R.J."/>
            <person name="Istrail S."/>
            <person name="Sutton G.G."/>
            <person name="Florea L."/>
            <person name="Halpern A.L."/>
            <person name="Mobarry C.M."/>
            <person name="Lippert R."/>
            <person name="Walenz B."/>
            <person name="Shatkay H."/>
            <person name="Dew I."/>
            <person name="Miller J.R."/>
            <person name="Flanigan M.J."/>
            <person name="Edwards N.J."/>
            <person name="Bolanos R."/>
            <person name="Fasulo D."/>
            <person name="Halldorsson B.V."/>
            <person name="Hannenhalli S."/>
            <person name="Turner R."/>
            <person name="Yooseph S."/>
            <person name="Lu F."/>
            <person name="Nusskern D.R."/>
            <person name="Shue B.C."/>
            <person name="Zheng X.H."/>
            <person name="Zhong F."/>
            <person name="Delcher A.L."/>
            <person name="Huson D.H."/>
            <person name="Kravitz S.A."/>
            <person name="Mouchard L."/>
            <person name="Reinert K."/>
            <person name="Remington K.A."/>
            <person name="Clark A.G."/>
            <person name="Waterman M.S."/>
            <person name="Eichler E.E."/>
            <person name="Adams M.D."/>
            <person name="Hunkapiller M.W."/>
            <person name="Myers E.W."/>
            <person name="Venter J.C."/>
        </authorList>
    </citation>
    <scope>NUCLEOTIDE SEQUENCE [LARGE SCALE GENOMIC DNA]</scope>
</reference>
<reference key="5">
    <citation type="journal article" date="2004" name="Genome Res.">
        <title>The status, quality, and expansion of the NIH full-length cDNA project: the Mammalian Gene Collection (MGC).</title>
        <authorList>
            <consortium name="The MGC Project Team"/>
        </authorList>
    </citation>
    <scope>NUCLEOTIDE SEQUENCE [LARGE SCALE MRNA] (ISOFORM 1)</scope>
    <scope>VARIANT ARG-483</scope>
</reference>
<reference key="6">
    <citation type="journal article" date="2011" name="Mol. Cell. Biol.">
        <title>SPATA18, a spermatogenesis-associated gene, is a novel transcriptional target of p53 and p63.</title>
        <authorList>
            <person name="Bornstein C."/>
            <person name="Brosh R."/>
            <person name="Molchadsky A."/>
            <person name="Madar S."/>
            <person name="Kogan-Sakin I."/>
            <person name="Goldstein I."/>
            <person name="Chakravarti D."/>
            <person name="Flores E.R."/>
            <person name="Goldfinger N."/>
            <person name="Sarig R."/>
            <person name="Rotter V."/>
        </authorList>
    </citation>
    <scope>INDUCTION</scope>
</reference>
<reference key="7">
    <citation type="journal article" date="2011" name="PLoS ONE">
        <title>Mieap, a p53-inducible protein, controls mitochondrial quality by repairing or eliminating unhealthy mitochondria.</title>
        <authorList>
            <person name="Kitamura N."/>
            <person name="Nakamura Y."/>
            <person name="Miyamoto Y."/>
            <person name="Miyamoto T."/>
            <person name="Kabu K."/>
            <person name="Yoshida M."/>
            <person name="Futamura M."/>
            <person name="Ichinose S."/>
            <person name="Arakawa H."/>
        </authorList>
    </citation>
    <scope>FUNCTION</scope>
    <scope>SUBCELLULAR LOCATION</scope>
    <scope>INTERACTION WITH BNIP3L</scope>
</reference>
<reference key="8">
    <citation type="journal article" date="2012" name="PLoS ONE">
        <title>BNIP3 and NIX mediate Mieap-induced accumulation of lysosomal proteins within mitochondria.</title>
        <authorList>
            <person name="Nakamura Y."/>
            <person name="Kitamura N."/>
            <person name="Shinogi D."/>
            <person name="Yoshida M."/>
            <person name="Goda O."/>
            <person name="Murai R."/>
            <person name="Kamino H."/>
            <person name="Arakawa H."/>
        </authorList>
    </citation>
    <scope>FUNCTION</scope>
    <scope>SUBCELLULAR LOCATION</scope>
    <scope>INTERACTION WITH BNIP3 AND BNIP3L</scope>
</reference>
<reference key="9">
    <citation type="journal article" date="2012" name="Sci. Rep.">
        <title>Identification of 14-3-3gamma as a Mieap-interacting protein and its role in mitochondrial quality control.</title>
        <authorList>
            <person name="Miyamoto T."/>
            <person name="Kitamura N."/>
            <person name="Ono M."/>
            <person name="Nakamura Y."/>
            <person name="Yoshida M."/>
            <person name="Kamino H."/>
            <person name="Murai R."/>
            <person name="Yamada T."/>
            <person name="Arakawa H."/>
        </authorList>
    </citation>
    <scope>FUNCTION</scope>
    <scope>INTERACTION WITH YWHAG (ISOFORMS 1 AND 2)</scope>
    <scope>SUBCELLULAR LOCATION (ISOFORMS 1 AND 2)</scope>
</reference>
<reference key="10">
    <citation type="journal article" date="2024" name="IScience">
        <title>Mieap forms membrane-less organelles involved in cardiolipin metabolism.</title>
        <authorList>
            <person name="Ikari N."/>
            <person name="Honjo K."/>
            <person name="Sagami Y."/>
            <person name="Nakamura Y."/>
            <person name="Arakawa H."/>
        </authorList>
    </citation>
    <scope>FUNCTION</scope>
    <scope>SUBCELLULAR LOCATION</scope>
</reference>
<proteinExistence type="evidence at protein level"/>
<protein>
    <recommendedName>
        <fullName>Mitochondria-eating protein</fullName>
    </recommendedName>
    <alternativeName>
        <fullName>Spermatogenesis-associated protein 18</fullName>
    </alternativeName>
</protein>
<comment type="function">
    <text evidence="6 7 9 11">Key regulator of mitochondrial quality that mediates the repairing or degradation of unhealthy mitochondria in response to mitochondrial damage (PubMed:21264221, PubMed:21264228, PubMed:22292033, PubMed:22532927). Mediator of mitochondrial protein catabolic process (also named MALM) by mediating the degradation of damaged proteins inside mitochondria by promoting the accumulation in the mitochondrial matrix of hydrolases that are characteristic of the lysosomal lumen (PubMed:21264221, PubMed:21264228, PubMed:22292033, PubMed:22532927). Also involved in mitochondrion degradation of damaged mitochondria by promoting the formation of vacuole-like structures (named MIV), which engulf and degrade unhealthy mitochondria by accumulating lysosomes (PubMed:21264228). The physical interaction of SPATA18/MIEAP, BNIP3 and BNIP3L/NIX at the mitochondrial outer membrane regulates the opening of a pore in the mitochondrial double membrane in order to mediate the translocation of lysosomal proteins from the cytoplasm to the mitochondrial matrix (PubMed:22292033). Binds cardiolipin (PubMed:38322995). May form molecular condensates (non-membrane-bounded organelles) within mitochondria that compartmentalize and promote cardiolipin metabolism (PubMed:38322995).</text>
</comment>
<comment type="subunit">
    <text evidence="7 9">Interacts (via coiled-coil domains) with BNIP3L (via BH3 domain). Interacts (via coiled-coil domains) with BNIP3 (via BH3 domain).</text>
</comment>
<comment type="subunit">
    <molecule>Isoform 1</molecule>
    <text evidence="10">Interacts with YWHAG/14-3-3 protein gamma; a protein that also plays a role in MALM.</text>
</comment>
<comment type="subunit">
    <molecule>Isoform 2</molecule>
    <text evidence="10">Interacts with YWHAG/14-3-3 protein gamma; a protein that also plays a role in MALM.</text>
</comment>
<comment type="interaction">
    <interactant intactId="EBI-11334239">
        <id>Q8TC71</id>
    </interactant>
    <interactant intactId="EBI-745226">
        <id>Q13155</id>
        <label>AIMP2</label>
    </interactant>
    <organismsDiffer>false</organismsDiffer>
    <experiments>3</experiments>
</comment>
<comment type="interaction">
    <interactant intactId="EBI-11334239">
        <id>Q8TC71</id>
    </interactant>
    <interactant intactId="EBI-3866279">
        <id>Q9BWT7</id>
        <label>CARD10</label>
    </interactant>
    <organismsDiffer>false</organismsDiffer>
    <experiments>3</experiments>
</comment>
<comment type="interaction">
    <interactant intactId="EBI-11334239">
        <id>Q8TC71</id>
    </interactant>
    <interactant intactId="EBI-10171570">
        <id>Q68D86</id>
        <label>CCDC102B</label>
    </interactant>
    <organismsDiffer>false</organismsDiffer>
    <experiments>3</experiments>
</comment>
<comment type="interaction">
    <interactant intactId="EBI-11334239">
        <id>Q8TC71</id>
    </interactant>
    <interactant intactId="EBI-2349927">
        <id>Q5JST6</id>
        <label>EFHC2</label>
    </interactant>
    <organismsDiffer>false</organismsDiffer>
    <experiments>3</experiments>
</comment>
<comment type="interaction">
    <interactant intactId="EBI-11334239">
        <id>Q8TC71</id>
    </interactant>
    <interactant intactId="EBI-1052570">
        <id>O95995</id>
        <label>GAS8</label>
    </interactant>
    <organismsDiffer>false</organismsDiffer>
    <experiments>3</experiments>
</comment>
<comment type="interaction">
    <interactant intactId="EBI-11334239">
        <id>Q8TC71</id>
    </interactant>
    <interactant intactId="EBI-618309">
        <id>Q08379</id>
        <label>GOLGA2</label>
    </interactant>
    <organismsDiffer>false</organismsDiffer>
    <experiments>3</experiments>
</comment>
<comment type="interaction">
    <interactant intactId="EBI-11334239">
        <id>Q8TC71</id>
    </interactant>
    <interactant intactId="EBI-740785">
        <id>P49639</id>
        <label>HOXA1</label>
    </interactant>
    <organismsDiffer>false</organismsDiffer>
    <experiments>3</experiments>
</comment>
<comment type="interaction">
    <interactant intactId="EBI-11334239">
        <id>Q8TC71</id>
    </interactant>
    <interactant intactId="EBI-473196">
        <id>Q5T3J3</id>
        <label>LRIF1</label>
    </interactant>
    <organismsDiffer>false</organismsDiffer>
    <experiments>3</experiments>
</comment>
<comment type="interaction">
    <interactant intactId="EBI-11334239">
        <id>Q8TC71</id>
    </interactant>
    <interactant intactId="EBI-742610">
        <id>Q9Y6D9</id>
        <label>MAD1L1</label>
    </interactant>
    <organismsDiffer>false</organismsDiffer>
    <experiments>3</experiments>
</comment>
<comment type="interaction">
    <interactant intactId="EBI-11334239">
        <id>Q8TC71</id>
    </interactant>
    <interactant intactId="EBI-14066006">
        <id>Q4G0R1</id>
        <label>PIBF1</label>
    </interactant>
    <organismsDiffer>false</organismsDiffer>
    <experiments>3</experiments>
</comment>
<comment type="interaction">
    <interactant intactId="EBI-11334239">
        <id>Q8TC71</id>
    </interactant>
    <interactant intactId="EBI-11334239">
        <id>Q8TC71</id>
        <label>SPATA18</label>
    </interactant>
    <organismsDiffer>false</organismsDiffer>
    <experiments>3</experiments>
</comment>
<comment type="interaction">
    <interactant intactId="EBI-11334239">
        <id>Q8TC71</id>
    </interactant>
    <interactant intactId="EBI-2554984">
        <id>Q9Y6A5</id>
        <label>TACC3</label>
    </interactant>
    <organismsDiffer>false</organismsDiffer>
    <experiments>3</experiments>
</comment>
<comment type="interaction">
    <interactant intactId="EBI-11334239">
        <id>Q8TC71</id>
    </interactant>
    <interactant intactId="EBI-12029034">
        <id>Q96PF1</id>
        <label>TGM7</label>
    </interactant>
    <organismsDiffer>false</organismsDiffer>
    <experiments>3</experiments>
</comment>
<comment type="subcellular location">
    <subcellularLocation>
        <location evidence="7 9 10">Cytoplasm</location>
        <location evidence="7 9 10">Cytosol</location>
    </subcellularLocation>
    <subcellularLocation>
        <location evidence="7 9">Mitochondrion outer membrane</location>
    </subcellularLocation>
    <subcellularLocation>
        <location evidence="10 11">Mitochondrion matrix</location>
    </subcellularLocation>
    <text evidence="7 9 10">Localizes to the cytosol under normal conditions (PubMed:21264228, PubMed:22532927). Relocalizes to mitochondrion outer membrane following cellular stress. May form molecular condensates in the mitochondrial matrix (PubMed:38322995). Colocalizes with BNIP3 and BNIP3L at the mitochondrion outer membrane (PubMed:22292033).</text>
</comment>
<comment type="subcellular location">
    <molecule>Isoform 1</molecule>
    <subcellularLocation>
        <location evidence="10">Cytoplasm</location>
        <location evidence="10">Cytosol</location>
    </subcellularLocation>
    <subcellularLocation>
        <location evidence="10">Mitochondrion matrix</location>
    </subcellularLocation>
    <text evidence="10">Appears to predominantly remain in the cytosol following induction of MALM (mitochondrial protein catabolic process).</text>
</comment>
<comment type="subcellular location">
    <molecule>Isoform 2</molecule>
    <subcellularLocation>
        <location evidence="10">Cytoplasm</location>
        <location evidence="10">Cytosol</location>
    </subcellularLocation>
    <subcellularLocation>
        <location evidence="10">Mitochondrion matrix</location>
    </subcellularLocation>
    <text evidence="10">Appears to predominantly localize to the mitochondrial matrix following induction of MALM (mitochondrial protein catabolic process).</text>
</comment>
<comment type="alternative products">
    <event type="alternative splicing"/>
    <isoform>
        <id>Q8TC71-1</id>
        <name>1</name>
        <name>Alpha</name>
        <name>Mieap-alpha</name>
        <sequence type="displayed"/>
    </isoform>
    <isoform>
        <id>Q8TC71-2</id>
        <name>2</name>
        <name>Beta</name>
        <name>Mieap-beta</name>
        <sequence type="described" ref="VSP_041048"/>
    </isoform>
</comment>
<comment type="induction">
    <text evidence="6 8">By p53/TP53 and p63/TP63. Directly activated by p53/TP53.</text>
</comment>
<comment type="similarity">
    <text evidence="14">Belongs to the MIEAP family.</text>
</comment>
<comment type="sequence caution" evidence="14">
    <conflict type="erroneous initiation">
        <sequence resource="EMBL-CDS" id="BAC05356"/>
    </conflict>
    <text>Truncated N-terminus.</text>
</comment>
<gene>
    <name type="primary">SPATA18</name>
    <name type="synonym">MIEAP</name>
</gene>